<evidence type="ECO:0000255" key="1">
    <source>
        <dbReference type="HAMAP-Rule" id="MF_01217"/>
    </source>
</evidence>
<evidence type="ECO:0000255" key="2">
    <source>
        <dbReference type="PROSITE-ProRule" id="PRU00258"/>
    </source>
</evidence>
<comment type="function">
    <text evidence="1">Carrier of the growing fatty acid chain in fatty acid biosynthesis.</text>
</comment>
<comment type="pathway">
    <text evidence="1">Lipid metabolism; fatty acid biosynthesis.</text>
</comment>
<comment type="subcellular location">
    <subcellularLocation>
        <location evidence="1">Cytoplasm</location>
    </subcellularLocation>
</comment>
<comment type="PTM">
    <text evidence="1">4'-phosphopantetheine is transferred from CoA to a specific serine of apo-ACP by AcpS. This modification is essential for activity because fatty acids are bound in thioester linkage to the sulfhydryl of the prosthetic group.</text>
</comment>
<comment type="similarity">
    <text evidence="1">Belongs to the acyl carrier protein (ACP) family.</text>
</comment>
<organism>
    <name type="scientific">Delftia acidovorans (strain DSM 14801 / SPH-1)</name>
    <dbReference type="NCBI Taxonomy" id="398578"/>
    <lineage>
        <taxon>Bacteria</taxon>
        <taxon>Pseudomonadati</taxon>
        <taxon>Pseudomonadota</taxon>
        <taxon>Betaproteobacteria</taxon>
        <taxon>Burkholderiales</taxon>
        <taxon>Comamonadaceae</taxon>
        <taxon>Delftia</taxon>
    </lineage>
</organism>
<gene>
    <name evidence="1" type="primary">acpP</name>
    <name type="ordered locus">Daci_5269</name>
</gene>
<dbReference type="EMBL" id="CP000884">
    <property type="protein sequence ID" value="ABX37898.1"/>
    <property type="molecule type" value="Genomic_DNA"/>
</dbReference>
<dbReference type="RefSeq" id="WP_003058049.1">
    <property type="nucleotide sequence ID" value="NC_010002.1"/>
</dbReference>
<dbReference type="SMR" id="A9BNK3"/>
<dbReference type="STRING" id="398578.Daci_5269"/>
<dbReference type="GeneID" id="94690733"/>
<dbReference type="KEGG" id="dac:Daci_5269"/>
<dbReference type="eggNOG" id="COG0236">
    <property type="taxonomic scope" value="Bacteria"/>
</dbReference>
<dbReference type="HOGENOM" id="CLU_108696_5_1_4"/>
<dbReference type="UniPathway" id="UPA00094"/>
<dbReference type="Proteomes" id="UP000000784">
    <property type="component" value="Chromosome"/>
</dbReference>
<dbReference type="GO" id="GO:0005829">
    <property type="term" value="C:cytosol"/>
    <property type="evidence" value="ECO:0007669"/>
    <property type="project" value="TreeGrafter"/>
</dbReference>
<dbReference type="GO" id="GO:0016020">
    <property type="term" value="C:membrane"/>
    <property type="evidence" value="ECO:0007669"/>
    <property type="project" value="GOC"/>
</dbReference>
<dbReference type="GO" id="GO:0000035">
    <property type="term" value="F:acyl binding"/>
    <property type="evidence" value="ECO:0007669"/>
    <property type="project" value="TreeGrafter"/>
</dbReference>
<dbReference type="GO" id="GO:0000036">
    <property type="term" value="F:acyl carrier activity"/>
    <property type="evidence" value="ECO:0007669"/>
    <property type="project" value="UniProtKB-UniRule"/>
</dbReference>
<dbReference type="GO" id="GO:0031177">
    <property type="term" value="F:phosphopantetheine binding"/>
    <property type="evidence" value="ECO:0007669"/>
    <property type="project" value="InterPro"/>
</dbReference>
<dbReference type="GO" id="GO:0009245">
    <property type="term" value="P:lipid A biosynthetic process"/>
    <property type="evidence" value="ECO:0007669"/>
    <property type="project" value="TreeGrafter"/>
</dbReference>
<dbReference type="FunFam" id="1.10.1200.10:FF:000001">
    <property type="entry name" value="Acyl carrier protein"/>
    <property type="match status" value="1"/>
</dbReference>
<dbReference type="Gene3D" id="1.10.1200.10">
    <property type="entry name" value="ACP-like"/>
    <property type="match status" value="1"/>
</dbReference>
<dbReference type="HAMAP" id="MF_01217">
    <property type="entry name" value="Acyl_carrier"/>
    <property type="match status" value="1"/>
</dbReference>
<dbReference type="InterPro" id="IPR003231">
    <property type="entry name" value="ACP"/>
</dbReference>
<dbReference type="InterPro" id="IPR036736">
    <property type="entry name" value="ACP-like_sf"/>
</dbReference>
<dbReference type="InterPro" id="IPR020806">
    <property type="entry name" value="PKS_PP-bd"/>
</dbReference>
<dbReference type="InterPro" id="IPR009081">
    <property type="entry name" value="PP-bd_ACP"/>
</dbReference>
<dbReference type="InterPro" id="IPR006162">
    <property type="entry name" value="Ppantetheine_attach_site"/>
</dbReference>
<dbReference type="NCBIfam" id="TIGR00517">
    <property type="entry name" value="acyl_carrier"/>
    <property type="match status" value="1"/>
</dbReference>
<dbReference type="NCBIfam" id="NF002148">
    <property type="entry name" value="PRK00982.1-2"/>
    <property type="match status" value="1"/>
</dbReference>
<dbReference type="NCBIfam" id="NF002149">
    <property type="entry name" value="PRK00982.1-3"/>
    <property type="match status" value="1"/>
</dbReference>
<dbReference type="NCBIfam" id="NF002150">
    <property type="entry name" value="PRK00982.1-4"/>
    <property type="match status" value="1"/>
</dbReference>
<dbReference type="NCBIfam" id="NF002151">
    <property type="entry name" value="PRK00982.1-5"/>
    <property type="match status" value="1"/>
</dbReference>
<dbReference type="PANTHER" id="PTHR20863">
    <property type="entry name" value="ACYL CARRIER PROTEIN"/>
    <property type="match status" value="1"/>
</dbReference>
<dbReference type="PANTHER" id="PTHR20863:SF76">
    <property type="entry name" value="CARRIER DOMAIN-CONTAINING PROTEIN"/>
    <property type="match status" value="1"/>
</dbReference>
<dbReference type="Pfam" id="PF00550">
    <property type="entry name" value="PP-binding"/>
    <property type="match status" value="1"/>
</dbReference>
<dbReference type="SMART" id="SM00823">
    <property type="entry name" value="PKS_PP"/>
    <property type="match status" value="1"/>
</dbReference>
<dbReference type="SUPFAM" id="SSF47336">
    <property type="entry name" value="ACP-like"/>
    <property type="match status" value="1"/>
</dbReference>
<dbReference type="PROSITE" id="PS50075">
    <property type="entry name" value="CARRIER"/>
    <property type="match status" value="1"/>
</dbReference>
<dbReference type="PROSITE" id="PS00012">
    <property type="entry name" value="PHOSPHOPANTETHEINE"/>
    <property type="match status" value="1"/>
</dbReference>
<accession>A9BNK3</accession>
<feature type="chain" id="PRO_1000139017" description="Acyl carrier protein">
    <location>
        <begin position="1"/>
        <end position="79"/>
    </location>
</feature>
<feature type="domain" description="Carrier" evidence="2">
    <location>
        <begin position="2"/>
        <end position="77"/>
    </location>
</feature>
<feature type="modified residue" description="O-(pantetheine 4'-phosphoryl)serine" evidence="2">
    <location>
        <position position="37"/>
    </location>
</feature>
<keyword id="KW-0963">Cytoplasm</keyword>
<keyword id="KW-0275">Fatty acid biosynthesis</keyword>
<keyword id="KW-0276">Fatty acid metabolism</keyword>
<keyword id="KW-0444">Lipid biosynthesis</keyword>
<keyword id="KW-0443">Lipid metabolism</keyword>
<keyword id="KW-0596">Phosphopantetheine</keyword>
<keyword id="KW-0597">Phosphoprotein</keyword>
<keyword id="KW-1185">Reference proteome</keyword>
<proteinExistence type="inferred from homology"/>
<protein>
    <recommendedName>
        <fullName evidence="1">Acyl carrier protein</fullName>
        <shortName evidence="1">ACP</shortName>
    </recommendedName>
</protein>
<sequence length="79" mass="8666">MSDIEARVKKIIAEQLGVEESQVTNEKAFVADLGADSLDTVELVMALEDEFGIEIPDEDAEKITTVQNAIDYANTHQKA</sequence>
<reference key="1">
    <citation type="submission" date="2007-11" db="EMBL/GenBank/DDBJ databases">
        <title>Complete sequence of Delftia acidovorans DSM 14801 / SPH-1.</title>
        <authorList>
            <person name="Copeland A."/>
            <person name="Lucas S."/>
            <person name="Lapidus A."/>
            <person name="Barry K."/>
            <person name="Glavina del Rio T."/>
            <person name="Dalin E."/>
            <person name="Tice H."/>
            <person name="Pitluck S."/>
            <person name="Lowry S."/>
            <person name="Clum A."/>
            <person name="Schmutz J."/>
            <person name="Larimer F."/>
            <person name="Land M."/>
            <person name="Hauser L."/>
            <person name="Kyrpides N."/>
            <person name="Kim E."/>
            <person name="Schleheck D."/>
            <person name="Richardson P."/>
        </authorList>
    </citation>
    <scope>NUCLEOTIDE SEQUENCE [LARGE SCALE GENOMIC DNA]</scope>
    <source>
        <strain>DSM 14801 / SPH-1</strain>
    </source>
</reference>
<name>ACP_DELAS</name>